<organism>
    <name type="scientific">Trichormus variabilis (strain ATCC 29413 / PCC 7937)</name>
    <name type="common">Anabaena variabilis</name>
    <dbReference type="NCBI Taxonomy" id="240292"/>
    <lineage>
        <taxon>Bacteria</taxon>
        <taxon>Bacillati</taxon>
        <taxon>Cyanobacteriota</taxon>
        <taxon>Cyanophyceae</taxon>
        <taxon>Nostocales</taxon>
        <taxon>Nostocaceae</taxon>
        <taxon>Trichormus</taxon>
    </lineage>
</organism>
<evidence type="ECO:0000255" key="1">
    <source>
        <dbReference type="HAMAP-Rule" id="MF_01633"/>
    </source>
</evidence>
<gene>
    <name evidence="1" type="primary">queC</name>
    <name type="ordered locus">Ava_2362</name>
</gene>
<accession>Q3MAK6</accession>
<proteinExistence type="inferred from homology"/>
<sequence length="227" mass="24982">MKAVILLSGGLDSSTILYQAKADGCECYSISFDYQQRHRRELHSAFLVAQTAGIVQHQVVNFDLRLWGGSALTDDKIDLPQERSVDAMSQNIPVTYVPARNTIFLSFALAYAEAIAAERVYIGVNALDYSGYPDCRPDYIEAMQEVFRLGTKQGREGQPINIVAPLINLKKTAIIQLGNQLGVPWNLTWSCYNGGDVACGVCDSCRLRLAAFAELGLEDPLPYLKGV</sequence>
<feature type="chain" id="PRO_0000246790" description="7-cyano-7-deazaguanine synthase">
    <location>
        <begin position="1"/>
        <end position="227"/>
    </location>
</feature>
<feature type="binding site" evidence="1">
    <location>
        <begin position="7"/>
        <end position="17"/>
    </location>
    <ligand>
        <name>ATP</name>
        <dbReference type="ChEBI" id="CHEBI:30616"/>
    </ligand>
</feature>
<feature type="binding site" evidence="1">
    <location>
        <position position="191"/>
    </location>
    <ligand>
        <name>Zn(2+)</name>
        <dbReference type="ChEBI" id="CHEBI:29105"/>
    </ligand>
</feature>
<feature type="binding site" evidence="1">
    <location>
        <position position="199"/>
    </location>
    <ligand>
        <name>Zn(2+)</name>
        <dbReference type="ChEBI" id="CHEBI:29105"/>
    </ligand>
</feature>
<feature type="binding site" evidence="1">
    <location>
        <position position="202"/>
    </location>
    <ligand>
        <name>Zn(2+)</name>
        <dbReference type="ChEBI" id="CHEBI:29105"/>
    </ligand>
</feature>
<feature type="binding site" evidence="1">
    <location>
        <position position="205"/>
    </location>
    <ligand>
        <name>Zn(2+)</name>
        <dbReference type="ChEBI" id="CHEBI:29105"/>
    </ligand>
</feature>
<dbReference type="EC" id="6.3.4.20" evidence="1"/>
<dbReference type="EMBL" id="CP000117">
    <property type="protein sequence ID" value="ABA21980.1"/>
    <property type="molecule type" value="Genomic_DNA"/>
</dbReference>
<dbReference type="SMR" id="Q3MAK6"/>
<dbReference type="STRING" id="240292.Ava_2362"/>
<dbReference type="KEGG" id="ava:Ava_2362"/>
<dbReference type="eggNOG" id="COG0603">
    <property type="taxonomic scope" value="Bacteria"/>
</dbReference>
<dbReference type="HOGENOM" id="CLU_081854_1_0_3"/>
<dbReference type="UniPathway" id="UPA00391"/>
<dbReference type="Proteomes" id="UP000002533">
    <property type="component" value="Chromosome"/>
</dbReference>
<dbReference type="GO" id="GO:0005524">
    <property type="term" value="F:ATP binding"/>
    <property type="evidence" value="ECO:0007669"/>
    <property type="project" value="UniProtKB-UniRule"/>
</dbReference>
<dbReference type="GO" id="GO:0016879">
    <property type="term" value="F:ligase activity, forming carbon-nitrogen bonds"/>
    <property type="evidence" value="ECO:0007669"/>
    <property type="project" value="UniProtKB-UniRule"/>
</dbReference>
<dbReference type="GO" id="GO:0008270">
    <property type="term" value="F:zinc ion binding"/>
    <property type="evidence" value="ECO:0007669"/>
    <property type="project" value="UniProtKB-UniRule"/>
</dbReference>
<dbReference type="GO" id="GO:0008616">
    <property type="term" value="P:queuosine biosynthetic process"/>
    <property type="evidence" value="ECO:0007669"/>
    <property type="project" value="UniProtKB-UniRule"/>
</dbReference>
<dbReference type="CDD" id="cd01995">
    <property type="entry name" value="QueC-like"/>
    <property type="match status" value="1"/>
</dbReference>
<dbReference type="Gene3D" id="3.40.50.620">
    <property type="entry name" value="HUPs"/>
    <property type="match status" value="1"/>
</dbReference>
<dbReference type="HAMAP" id="MF_01633">
    <property type="entry name" value="QueC"/>
    <property type="match status" value="1"/>
</dbReference>
<dbReference type="InterPro" id="IPR018317">
    <property type="entry name" value="QueC"/>
</dbReference>
<dbReference type="InterPro" id="IPR014729">
    <property type="entry name" value="Rossmann-like_a/b/a_fold"/>
</dbReference>
<dbReference type="NCBIfam" id="TIGR00364">
    <property type="entry name" value="7-cyano-7-deazaguanine synthase QueC"/>
    <property type="match status" value="1"/>
</dbReference>
<dbReference type="PANTHER" id="PTHR42914">
    <property type="entry name" value="7-CYANO-7-DEAZAGUANINE SYNTHASE"/>
    <property type="match status" value="1"/>
</dbReference>
<dbReference type="PANTHER" id="PTHR42914:SF1">
    <property type="entry name" value="7-CYANO-7-DEAZAGUANINE SYNTHASE"/>
    <property type="match status" value="1"/>
</dbReference>
<dbReference type="Pfam" id="PF06508">
    <property type="entry name" value="QueC"/>
    <property type="match status" value="1"/>
</dbReference>
<dbReference type="PIRSF" id="PIRSF006293">
    <property type="entry name" value="ExsB"/>
    <property type="match status" value="1"/>
</dbReference>
<dbReference type="SUPFAM" id="SSF52402">
    <property type="entry name" value="Adenine nucleotide alpha hydrolases-like"/>
    <property type="match status" value="1"/>
</dbReference>
<comment type="function">
    <text evidence="1">Catalyzes the ATP-dependent conversion of 7-carboxy-7-deazaguanine (CDG) to 7-cyano-7-deazaguanine (preQ(0)).</text>
</comment>
<comment type="catalytic activity">
    <reaction evidence="1">
        <text>7-carboxy-7-deazaguanine + NH4(+) + ATP = 7-cyano-7-deazaguanine + ADP + phosphate + H2O + H(+)</text>
        <dbReference type="Rhea" id="RHEA:27982"/>
        <dbReference type="ChEBI" id="CHEBI:15377"/>
        <dbReference type="ChEBI" id="CHEBI:15378"/>
        <dbReference type="ChEBI" id="CHEBI:28938"/>
        <dbReference type="ChEBI" id="CHEBI:30616"/>
        <dbReference type="ChEBI" id="CHEBI:43474"/>
        <dbReference type="ChEBI" id="CHEBI:45075"/>
        <dbReference type="ChEBI" id="CHEBI:61036"/>
        <dbReference type="ChEBI" id="CHEBI:456216"/>
        <dbReference type="EC" id="6.3.4.20"/>
    </reaction>
</comment>
<comment type="cofactor">
    <cofactor evidence="1">
        <name>Zn(2+)</name>
        <dbReference type="ChEBI" id="CHEBI:29105"/>
    </cofactor>
    <text evidence="1">Binds 1 zinc ion per subunit.</text>
</comment>
<comment type="pathway">
    <text evidence="1">Purine metabolism; 7-cyano-7-deazaguanine biosynthesis.</text>
</comment>
<comment type="similarity">
    <text evidence="1">Belongs to the QueC family.</text>
</comment>
<protein>
    <recommendedName>
        <fullName evidence="1">7-cyano-7-deazaguanine synthase</fullName>
        <ecNumber evidence="1">6.3.4.20</ecNumber>
    </recommendedName>
    <alternativeName>
        <fullName evidence="1">7-cyano-7-carbaguanine synthase</fullName>
    </alternativeName>
    <alternativeName>
        <fullName evidence="1">PreQ(0) synthase</fullName>
    </alternativeName>
    <alternativeName>
        <fullName evidence="1">Queuosine biosynthesis protein QueC</fullName>
    </alternativeName>
</protein>
<keyword id="KW-0067">ATP-binding</keyword>
<keyword id="KW-0436">Ligase</keyword>
<keyword id="KW-0479">Metal-binding</keyword>
<keyword id="KW-0547">Nucleotide-binding</keyword>
<keyword id="KW-0671">Queuosine biosynthesis</keyword>
<keyword id="KW-0862">Zinc</keyword>
<name>QUEC_TRIV2</name>
<reference key="1">
    <citation type="journal article" date="2014" name="Stand. Genomic Sci.">
        <title>Complete genome sequence of Anabaena variabilis ATCC 29413.</title>
        <authorList>
            <person name="Thiel T."/>
            <person name="Pratte B.S."/>
            <person name="Zhong J."/>
            <person name="Goodwin L."/>
            <person name="Copeland A."/>
            <person name="Lucas S."/>
            <person name="Han C."/>
            <person name="Pitluck S."/>
            <person name="Land M.L."/>
            <person name="Kyrpides N.C."/>
            <person name="Woyke T."/>
        </authorList>
    </citation>
    <scope>NUCLEOTIDE SEQUENCE [LARGE SCALE GENOMIC DNA]</scope>
    <source>
        <strain>ATCC 29413 / PCC 7937</strain>
    </source>
</reference>